<dbReference type="EMBL" id="D38520">
    <property type="protein sequence ID" value="BAA07525.1"/>
    <property type="molecule type" value="Genomic_DNA"/>
</dbReference>
<dbReference type="EMBL" id="U29581">
    <property type="protein sequence ID" value="AAB40443.1"/>
    <property type="molecule type" value="Genomic_DNA"/>
</dbReference>
<dbReference type="EMBL" id="U00096">
    <property type="protein sequence ID" value="AAC75835.1"/>
    <property type="molecule type" value="Genomic_DNA"/>
</dbReference>
<dbReference type="EMBL" id="AP009048">
    <property type="protein sequence ID" value="BAE76865.1"/>
    <property type="molecule type" value="Genomic_DNA"/>
</dbReference>
<dbReference type="PIR" id="A55944">
    <property type="entry name" value="A55944"/>
</dbReference>
<dbReference type="RefSeq" id="NP_417273.1">
    <property type="nucleotide sequence ID" value="NC_000913.3"/>
</dbReference>
<dbReference type="RefSeq" id="WP_000342431.1">
    <property type="nucleotide sequence ID" value="NZ_STEB01000030.1"/>
</dbReference>
<dbReference type="PDB" id="3FFV">
    <property type="method" value="X-ray"/>
    <property type="resolution" value="2.00 A"/>
    <property type="chains" value="A/B=1-181"/>
</dbReference>
<dbReference type="PDBsum" id="3FFV"/>
<dbReference type="SMR" id="P0A8U0"/>
<dbReference type="BioGRID" id="4263497">
    <property type="interactions" value="21"/>
</dbReference>
<dbReference type="DIP" id="DIP-48106N"/>
<dbReference type="FunCoup" id="P0A8U0">
    <property type="interactions" value="55"/>
</dbReference>
<dbReference type="STRING" id="511145.b2793"/>
<dbReference type="jPOST" id="P0A8U0"/>
<dbReference type="PaxDb" id="511145-b2793"/>
<dbReference type="EnsemblBacteria" id="AAC75835">
    <property type="protein sequence ID" value="AAC75835"/>
    <property type="gene ID" value="b2793"/>
</dbReference>
<dbReference type="GeneID" id="93779205"/>
<dbReference type="GeneID" id="947271"/>
<dbReference type="KEGG" id="ecj:JW2764"/>
<dbReference type="KEGG" id="eco:b2793"/>
<dbReference type="KEGG" id="ecoc:C3026_15360"/>
<dbReference type="PATRIC" id="fig|1411691.4.peg.3940"/>
<dbReference type="EchoBASE" id="EB2792"/>
<dbReference type="eggNOG" id="ENOG502ZCMR">
    <property type="taxonomic scope" value="Bacteria"/>
</dbReference>
<dbReference type="HOGENOM" id="CLU_121866_0_0_6"/>
<dbReference type="InParanoid" id="P0A8U0"/>
<dbReference type="OMA" id="WIEIPGE"/>
<dbReference type="OrthoDB" id="5599437at2"/>
<dbReference type="PhylomeDB" id="P0A8U0"/>
<dbReference type="BioCyc" id="EcoCyc:G7451-MONOMER"/>
<dbReference type="EvolutionaryTrace" id="P0A8U0"/>
<dbReference type="PRO" id="PR:P0A8U0"/>
<dbReference type="Proteomes" id="UP000000625">
    <property type="component" value="Chromosome"/>
</dbReference>
<dbReference type="GO" id="GO:0005737">
    <property type="term" value="C:cytoplasm"/>
    <property type="evidence" value="ECO:0000314"/>
    <property type="project" value="EcoCyc"/>
</dbReference>
<dbReference type="GO" id="GO:0009898">
    <property type="term" value="C:cytoplasmic side of plasma membrane"/>
    <property type="evidence" value="ECO:0007669"/>
    <property type="project" value="InterPro"/>
</dbReference>
<dbReference type="GO" id="GO:0043254">
    <property type="term" value="P:regulation of protein-containing complex assembly"/>
    <property type="evidence" value="ECO:0000314"/>
    <property type="project" value="EcoCyc"/>
</dbReference>
<dbReference type="CDD" id="cd16323">
    <property type="entry name" value="Syd"/>
    <property type="match status" value="1"/>
</dbReference>
<dbReference type="FunFam" id="3.40.1580.20:FF:000001">
    <property type="entry name" value="Protein Syd"/>
    <property type="match status" value="1"/>
</dbReference>
<dbReference type="Gene3D" id="3.40.1580.20">
    <property type="entry name" value="Syd protein"/>
    <property type="match status" value="1"/>
</dbReference>
<dbReference type="HAMAP" id="MF_01104">
    <property type="entry name" value="Syd"/>
    <property type="match status" value="1"/>
</dbReference>
<dbReference type="InterPro" id="IPR009948">
    <property type="entry name" value="Syd"/>
</dbReference>
<dbReference type="InterPro" id="IPR038228">
    <property type="entry name" value="Syd_sf"/>
</dbReference>
<dbReference type="NCBIfam" id="NF003439">
    <property type="entry name" value="PRK04968.1"/>
    <property type="match status" value="1"/>
</dbReference>
<dbReference type="Pfam" id="PF07348">
    <property type="entry name" value="Syd"/>
    <property type="match status" value="1"/>
</dbReference>
<evidence type="ECO:0000305" key="1"/>
<evidence type="ECO:0007829" key="2">
    <source>
        <dbReference type="PDB" id="3FFV"/>
    </source>
</evidence>
<accession>P0A8U0</accession>
<accession>P43526</accession>
<accession>Q2MA41</accession>
<reference key="1">
    <citation type="journal article" date="1995" name="J. Biol. Chem.">
        <title>Product of a new gene, syd, functionally interacts with SecY when overproduced in Escherichia coli.</title>
        <authorList>
            <person name="Shimoike T."/>
            <person name="Taura T."/>
            <person name="Kihara A."/>
            <person name="Yoshihisa T."/>
            <person name="Akiyama Y."/>
            <person name="Cannon K."/>
            <person name="Ito K."/>
        </authorList>
    </citation>
    <scope>NUCLEOTIDE SEQUENCE [GENOMIC DNA]</scope>
    <scope>PROTEIN SEQUENCE OF 1-16</scope>
    <source>
        <strain>K12</strain>
    </source>
</reference>
<reference key="2">
    <citation type="journal article" date="1997" name="Science">
        <title>The complete genome sequence of Escherichia coli K-12.</title>
        <authorList>
            <person name="Blattner F.R."/>
            <person name="Plunkett G. III"/>
            <person name="Bloch C.A."/>
            <person name="Perna N.T."/>
            <person name="Burland V."/>
            <person name="Riley M."/>
            <person name="Collado-Vides J."/>
            <person name="Glasner J.D."/>
            <person name="Rode C.K."/>
            <person name="Mayhew G.F."/>
            <person name="Gregor J."/>
            <person name="Davis N.W."/>
            <person name="Kirkpatrick H.A."/>
            <person name="Goeden M.A."/>
            <person name="Rose D.J."/>
            <person name="Mau B."/>
            <person name="Shao Y."/>
        </authorList>
    </citation>
    <scope>NUCLEOTIDE SEQUENCE [LARGE SCALE GENOMIC DNA]</scope>
    <source>
        <strain>K12 / MG1655 / ATCC 47076</strain>
    </source>
</reference>
<reference key="3">
    <citation type="journal article" date="2006" name="Mol. Syst. Biol.">
        <title>Highly accurate genome sequences of Escherichia coli K-12 strains MG1655 and W3110.</title>
        <authorList>
            <person name="Hayashi K."/>
            <person name="Morooka N."/>
            <person name="Yamamoto Y."/>
            <person name="Fujita K."/>
            <person name="Isono K."/>
            <person name="Choi S."/>
            <person name="Ohtsubo E."/>
            <person name="Baba T."/>
            <person name="Wanner B.L."/>
            <person name="Mori H."/>
            <person name="Horiuchi T."/>
        </authorList>
    </citation>
    <scope>NUCLEOTIDE SEQUENCE [LARGE SCALE GENOMIC DNA]</scope>
    <source>
        <strain>K12 / W3110 / ATCC 27325 / DSM 5911</strain>
    </source>
</reference>
<reference key="4">
    <citation type="journal article" date="1998" name="J. Biol. Chem.">
        <title>Syd, a SecY-interacting protein, excludes SecA from the SecYE complex with an altered SecY24 subunit.</title>
        <authorList>
            <person name="Matsuo E."/>
            <person name="Mori H."/>
            <person name="Shimoike T."/>
            <person name="Ito K."/>
        </authorList>
    </citation>
    <scope>INTERACTION WITH SECY</scope>
    <source>
        <strain>K12</strain>
    </source>
</reference>
<gene>
    <name type="primary">syd</name>
    <name type="synonym">ydr</name>
    <name type="ordered locus">b2793</name>
    <name type="ordered locus">JW2764</name>
</gene>
<name>SYDP_ECOLI</name>
<keyword id="KW-0002">3D-structure</keyword>
<keyword id="KW-0997">Cell inner membrane</keyword>
<keyword id="KW-1003">Cell membrane</keyword>
<keyword id="KW-0903">Direct protein sequencing</keyword>
<keyword id="KW-0472">Membrane</keyword>
<keyword id="KW-1185">Reference proteome</keyword>
<feature type="chain" id="PRO_0000214136" description="Protein Syd">
    <location>
        <begin position="1"/>
        <end position="181"/>
    </location>
</feature>
<feature type="helix" evidence="2">
    <location>
        <begin position="4"/>
        <end position="24"/>
    </location>
</feature>
<feature type="strand" evidence="2">
    <location>
        <begin position="25"/>
        <end position="27"/>
    </location>
</feature>
<feature type="strand" evidence="2">
    <location>
        <begin position="29"/>
        <end position="31"/>
    </location>
</feature>
<feature type="turn" evidence="2">
    <location>
        <begin position="32"/>
        <end position="35"/>
    </location>
</feature>
<feature type="strand" evidence="2">
    <location>
        <begin position="41"/>
        <end position="44"/>
    </location>
</feature>
<feature type="strand" evidence="2">
    <location>
        <begin position="49"/>
        <end position="51"/>
    </location>
</feature>
<feature type="helix" evidence="2">
    <location>
        <begin position="63"/>
        <end position="68"/>
    </location>
</feature>
<feature type="helix" evidence="2">
    <location>
        <begin position="75"/>
        <end position="80"/>
    </location>
</feature>
<feature type="strand" evidence="2">
    <location>
        <begin position="82"/>
        <end position="85"/>
    </location>
</feature>
<feature type="strand" evidence="2">
    <location>
        <begin position="89"/>
        <end position="93"/>
    </location>
</feature>
<feature type="strand" evidence="2">
    <location>
        <begin position="96"/>
        <end position="100"/>
    </location>
</feature>
<feature type="helix" evidence="2">
    <location>
        <begin position="106"/>
        <end position="125"/>
    </location>
</feature>
<feature type="strand" evidence="2">
    <location>
        <begin position="131"/>
        <end position="136"/>
    </location>
</feature>
<feature type="strand" evidence="2">
    <location>
        <begin position="142"/>
        <end position="147"/>
    </location>
</feature>
<feature type="turn" evidence="2">
    <location>
        <begin position="148"/>
        <end position="150"/>
    </location>
</feature>
<feature type="strand" evidence="2">
    <location>
        <begin position="153"/>
        <end position="157"/>
    </location>
</feature>
<feature type="strand" evidence="2">
    <location>
        <begin position="163"/>
        <end position="169"/>
    </location>
</feature>
<feature type="helix" evidence="2">
    <location>
        <begin position="170"/>
        <end position="176"/>
    </location>
</feature>
<comment type="function">
    <text>Interacts with the SecY protein in vivo. May bind preferentially to an uncomplexed state of SecY, thus functioning either as a chelating agent for excess SecY in the cell or as a regulatory factor that negatively controls the translocase function.</text>
</comment>
<comment type="subcellular location">
    <subcellularLocation>
        <location>Cell inner membrane</location>
        <topology>Peripheral membrane protein</topology>
        <orientation>Cytoplasmic side</orientation>
    </subcellularLocation>
    <text>Loosely associated with the cytoplasmic side of the inner membrane, probably via SecY.</text>
</comment>
<comment type="similarity">
    <text evidence="1">Belongs to the Syd family.</text>
</comment>
<protein>
    <recommendedName>
        <fullName>Protein Syd</fullName>
    </recommendedName>
</protein>
<sequence length="181" mass="20708">MDDLTAQALKDFTARYCDAWHEEHKSWPLSEELYGVPSPCIISTTEDAVYWQPQPFTGEQNVNAVERAFDIVIQPTIHTFYTTQFAGDMHAQFGDIKLTLLQTWSEDDFRRVQENLIGHLVTQKRLKLPPTLFIATLEEELEVISVCNLSGEVCKETLGTRKRTHLASNLAEFLNQLKPLL</sequence>
<proteinExistence type="evidence at protein level"/>
<organism>
    <name type="scientific">Escherichia coli (strain K12)</name>
    <dbReference type="NCBI Taxonomy" id="83333"/>
    <lineage>
        <taxon>Bacteria</taxon>
        <taxon>Pseudomonadati</taxon>
        <taxon>Pseudomonadota</taxon>
        <taxon>Gammaproteobacteria</taxon>
        <taxon>Enterobacterales</taxon>
        <taxon>Enterobacteriaceae</taxon>
        <taxon>Escherichia</taxon>
    </lineage>
</organism>